<sequence>MKKNITKTIIASTVIAAGLLTQTNDAKAFFSYEWKGLEIAKNLADQAKKDDERIDKLMKESDKNLTPYKAETVNDLYLIVKKLSQGDVKKAVVRIKDGGPRDYYTFDLTRPLEENRKNIKVVKNGEIDSITWY</sequence>
<organism>
    <name type="scientific">Staphylococcus aureus (strain USA300)</name>
    <dbReference type="NCBI Taxonomy" id="367830"/>
    <lineage>
        <taxon>Bacteria</taxon>
        <taxon>Bacillati</taxon>
        <taxon>Bacillota</taxon>
        <taxon>Bacilli</taxon>
        <taxon>Bacillales</taxon>
        <taxon>Staphylococcaceae</taxon>
        <taxon>Staphylococcus</taxon>
    </lineage>
</organism>
<dbReference type="EMBL" id="CP000255">
    <property type="protein sequence ID" value="ABD22738.1"/>
    <property type="molecule type" value="Genomic_DNA"/>
</dbReference>
<dbReference type="RefSeq" id="WP_000739563.1">
    <property type="nucleotide sequence ID" value="NZ_CP027476.1"/>
</dbReference>
<dbReference type="KEGG" id="saa:SAUSA300_1053"/>
<dbReference type="HOGENOM" id="CLU_157996_0_0_9"/>
<dbReference type="OMA" id="NQKPYKG"/>
<dbReference type="Proteomes" id="UP000001939">
    <property type="component" value="Chromosome"/>
</dbReference>
<dbReference type="GO" id="GO:0005576">
    <property type="term" value="C:extracellular region"/>
    <property type="evidence" value="ECO:0007669"/>
    <property type="project" value="UniProtKB-SubCell"/>
</dbReference>
<dbReference type="Gene3D" id="3.10.20.390">
    <property type="entry name" value="Chemotaxis-inhibiting protein CHIPS"/>
    <property type="match status" value="1"/>
</dbReference>
<dbReference type="InterPro" id="IPR023256">
    <property type="entry name" value="FLIPR"/>
</dbReference>
<dbReference type="InterPro" id="IPR038529">
    <property type="entry name" value="FLIPR/CHIP_sf"/>
</dbReference>
<dbReference type="InterPro" id="IPR023253">
    <property type="entry name" value="FLIPR/CHIPS"/>
</dbReference>
<dbReference type="NCBIfam" id="NF009592">
    <property type="entry name" value="PRK13033.1"/>
    <property type="match status" value="1"/>
</dbReference>
<dbReference type="Pfam" id="PF16104">
    <property type="entry name" value="FPRL1_inhibitor"/>
    <property type="match status" value="1"/>
</dbReference>
<dbReference type="PRINTS" id="PR02037">
    <property type="entry name" value="FLIPR"/>
</dbReference>
<dbReference type="PRINTS" id="PR02035">
    <property type="entry name" value="FLIPRCHIPS"/>
</dbReference>
<evidence type="ECO:0000250" key="1"/>
<evidence type="ECO:0000255" key="2"/>
<evidence type="ECO:0000305" key="3"/>
<comment type="function">
    <text evidence="1">May be involved in countering the first line of host defense mechanisms. Impairs the leukocyte response to FPRL1 agonists by binding directly to host FPRL1 (By similarity).</text>
</comment>
<comment type="subcellular location">
    <subcellularLocation>
        <location evidence="1">Secreted</location>
    </subcellularLocation>
</comment>
<comment type="similarity">
    <text evidence="3">Belongs to the CHIPS/FLIPr family.</text>
</comment>
<gene>
    <name type="primary">flr</name>
    <name type="ordered locus">SAUSA300_1053</name>
</gene>
<proteinExistence type="inferred from homology"/>
<accession>Q2FHS7</accession>
<feature type="signal peptide" evidence="2">
    <location>
        <begin position="1"/>
        <end position="28"/>
    </location>
</feature>
<feature type="chain" id="PRO_0000286688" description="FPRL1 inhibitory protein">
    <location>
        <begin position="29"/>
        <end position="133"/>
    </location>
</feature>
<name>FLIPR_STAA3</name>
<protein>
    <recommendedName>
        <fullName>FPRL1 inhibitory protein</fullName>
        <shortName>FLIPr</shortName>
    </recommendedName>
</protein>
<keyword id="KW-0964">Secreted</keyword>
<keyword id="KW-0732">Signal</keyword>
<keyword id="KW-0843">Virulence</keyword>
<reference key="1">
    <citation type="journal article" date="2006" name="Lancet">
        <title>Complete genome sequence of USA300, an epidemic clone of community-acquired meticillin-resistant Staphylococcus aureus.</title>
        <authorList>
            <person name="Diep B.A."/>
            <person name="Gill S.R."/>
            <person name="Chang R.F."/>
            <person name="Phan T.H."/>
            <person name="Chen J.H."/>
            <person name="Davidson M.G."/>
            <person name="Lin F."/>
            <person name="Lin J."/>
            <person name="Carleton H.A."/>
            <person name="Mongodin E.F."/>
            <person name="Sensabaugh G.F."/>
            <person name="Perdreau-Remington F."/>
        </authorList>
    </citation>
    <scope>NUCLEOTIDE SEQUENCE [LARGE SCALE GENOMIC DNA]</scope>
    <source>
        <strain>USA300</strain>
    </source>
</reference>